<dbReference type="EMBL" id="CP001029">
    <property type="protein sequence ID" value="ACB80316.1"/>
    <property type="status" value="ALT_INIT"/>
    <property type="molecule type" value="Genomic_DNA"/>
</dbReference>
<dbReference type="RefSeq" id="WP_012253654.1">
    <property type="nucleotide sequence ID" value="NC_010725.1"/>
</dbReference>
<dbReference type="SMR" id="B1Z783"/>
<dbReference type="STRING" id="441620.Mpop_2154"/>
<dbReference type="GeneID" id="72989879"/>
<dbReference type="KEGG" id="mpo:Mpop_2154"/>
<dbReference type="eggNOG" id="COG0093">
    <property type="taxonomic scope" value="Bacteria"/>
</dbReference>
<dbReference type="HOGENOM" id="CLU_095071_2_1_5"/>
<dbReference type="OrthoDB" id="9806379at2"/>
<dbReference type="Proteomes" id="UP000007136">
    <property type="component" value="Chromosome"/>
</dbReference>
<dbReference type="GO" id="GO:0022625">
    <property type="term" value="C:cytosolic large ribosomal subunit"/>
    <property type="evidence" value="ECO:0007669"/>
    <property type="project" value="TreeGrafter"/>
</dbReference>
<dbReference type="GO" id="GO:0070180">
    <property type="term" value="F:large ribosomal subunit rRNA binding"/>
    <property type="evidence" value="ECO:0007669"/>
    <property type="project" value="TreeGrafter"/>
</dbReference>
<dbReference type="GO" id="GO:0003735">
    <property type="term" value="F:structural constituent of ribosome"/>
    <property type="evidence" value="ECO:0007669"/>
    <property type="project" value="InterPro"/>
</dbReference>
<dbReference type="GO" id="GO:0006412">
    <property type="term" value="P:translation"/>
    <property type="evidence" value="ECO:0007669"/>
    <property type="project" value="UniProtKB-UniRule"/>
</dbReference>
<dbReference type="CDD" id="cd00337">
    <property type="entry name" value="Ribosomal_uL14"/>
    <property type="match status" value="1"/>
</dbReference>
<dbReference type="FunFam" id="2.40.150.20:FF:000001">
    <property type="entry name" value="50S ribosomal protein L14"/>
    <property type="match status" value="1"/>
</dbReference>
<dbReference type="Gene3D" id="2.40.150.20">
    <property type="entry name" value="Ribosomal protein L14"/>
    <property type="match status" value="1"/>
</dbReference>
<dbReference type="HAMAP" id="MF_01367">
    <property type="entry name" value="Ribosomal_uL14"/>
    <property type="match status" value="1"/>
</dbReference>
<dbReference type="InterPro" id="IPR000218">
    <property type="entry name" value="Ribosomal_uL14"/>
</dbReference>
<dbReference type="InterPro" id="IPR005745">
    <property type="entry name" value="Ribosomal_uL14_bac-type"/>
</dbReference>
<dbReference type="InterPro" id="IPR019972">
    <property type="entry name" value="Ribosomal_uL14_CS"/>
</dbReference>
<dbReference type="InterPro" id="IPR036853">
    <property type="entry name" value="Ribosomal_uL14_sf"/>
</dbReference>
<dbReference type="NCBIfam" id="TIGR01067">
    <property type="entry name" value="rplN_bact"/>
    <property type="match status" value="1"/>
</dbReference>
<dbReference type="PANTHER" id="PTHR11761">
    <property type="entry name" value="50S/60S RIBOSOMAL PROTEIN L14/L23"/>
    <property type="match status" value="1"/>
</dbReference>
<dbReference type="PANTHER" id="PTHR11761:SF3">
    <property type="entry name" value="LARGE RIBOSOMAL SUBUNIT PROTEIN UL14M"/>
    <property type="match status" value="1"/>
</dbReference>
<dbReference type="Pfam" id="PF00238">
    <property type="entry name" value="Ribosomal_L14"/>
    <property type="match status" value="1"/>
</dbReference>
<dbReference type="SMART" id="SM01374">
    <property type="entry name" value="Ribosomal_L14"/>
    <property type="match status" value="1"/>
</dbReference>
<dbReference type="SUPFAM" id="SSF50193">
    <property type="entry name" value="Ribosomal protein L14"/>
    <property type="match status" value="1"/>
</dbReference>
<dbReference type="PROSITE" id="PS00049">
    <property type="entry name" value="RIBOSOMAL_L14"/>
    <property type="match status" value="1"/>
</dbReference>
<protein>
    <recommendedName>
        <fullName evidence="1">Large ribosomal subunit protein uL14</fullName>
    </recommendedName>
    <alternativeName>
        <fullName evidence="2">50S ribosomal protein L14</fullName>
    </alternativeName>
</protein>
<evidence type="ECO:0000255" key="1">
    <source>
        <dbReference type="HAMAP-Rule" id="MF_01367"/>
    </source>
</evidence>
<evidence type="ECO:0000305" key="2"/>
<accession>B1Z783</accession>
<gene>
    <name evidence="1" type="primary">rplN</name>
    <name type="ordered locus">Mpop_2154</name>
</gene>
<organism>
    <name type="scientific">Methylorubrum populi (strain ATCC BAA-705 / NCIMB 13946 / BJ001)</name>
    <name type="common">Methylobacterium populi</name>
    <dbReference type="NCBI Taxonomy" id="441620"/>
    <lineage>
        <taxon>Bacteria</taxon>
        <taxon>Pseudomonadati</taxon>
        <taxon>Pseudomonadota</taxon>
        <taxon>Alphaproteobacteria</taxon>
        <taxon>Hyphomicrobiales</taxon>
        <taxon>Methylobacteriaceae</taxon>
        <taxon>Methylorubrum</taxon>
    </lineage>
</organism>
<keyword id="KW-0687">Ribonucleoprotein</keyword>
<keyword id="KW-0689">Ribosomal protein</keyword>
<keyword id="KW-0694">RNA-binding</keyword>
<keyword id="KW-0699">rRNA-binding</keyword>
<reference key="1">
    <citation type="submission" date="2008-04" db="EMBL/GenBank/DDBJ databases">
        <title>Complete sequence of chromosome of Methylobacterium populi BJ001.</title>
        <authorList>
            <consortium name="US DOE Joint Genome Institute"/>
            <person name="Copeland A."/>
            <person name="Lucas S."/>
            <person name="Lapidus A."/>
            <person name="Glavina del Rio T."/>
            <person name="Dalin E."/>
            <person name="Tice H."/>
            <person name="Bruce D."/>
            <person name="Goodwin L."/>
            <person name="Pitluck S."/>
            <person name="Chertkov O."/>
            <person name="Brettin T."/>
            <person name="Detter J.C."/>
            <person name="Han C."/>
            <person name="Kuske C.R."/>
            <person name="Schmutz J."/>
            <person name="Larimer F."/>
            <person name="Land M."/>
            <person name="Hauser L."/>
            <person name="Kyrpides N."/>
            <person name="Mikhailova N."/>
            <person name="Marx C."/>
            <person name="Richardson P."/>
        </authorList>
    </citation>
    <scope>NUCLEOTIDE SEQUENCE [LARGE SCALE GENOMIC DNA]</scope>
    <source>
        <strain>ATCC BAA-705 / NCIMB 13946 / BJ001</strain>
    </source>
</reference>
<comment type="function">
    <text evidence="1">Binds to 23S rRNA. Forms part of two intersubunit bridges in the 70S ribosome.</text>
</comment>
<comment type="subunit">
    <text evidence="1">Part of the 50S ribosomal subunit. Forms a cluster with proteins L3 and L19. In the 70S ribosome, L14 and L19 interact and together make contacts with the 16S rRNA in bridges B5 and B8.</text>
</comment>
<comment type="similarity">
    <text evidence="1">Belongs to the universal ribosomal protein uL14 family.</text>
</comment>
<comment type="sequence caution" evidence="2">
    <conflict type="erroneous initiation">
        <sequence resource="EMBL-CDS" id="ACB80316"/>
    </conflict>
</comment>
<proteinExistence type="inferred from homology"/>
<name>RL14_METPB</name>
<sequence length="122" mass="13347">MIQMQTNLDVADNSGARRVMCIKVLGGSKRKYAGVGDIIVVSVKEAIPRGRVKKGDVMKAVVVRTAKDVKRADGSVIRFDKNAAVLINNQKEPVGTRIFGPVPRELRARNHMKIISLAPEVL</sequence>
<feature type="chain" id="PRO_0000355819" description="Large ribosomal subunit protein uL14">
    <location>
        <begin position="1"/>
        <end position="122"/>
    </location>
</feature>